<sequence>MTITFQLAVFALIVTSFLLVIGVPVVLASPDGWSSNKNTVFSGASLWIGLVFLVGILNSFVS</sequence>
<dbReference type="EMBL" id="AY958086">
    <property type="protein sequence ID" value="AAX45850.1"/>
    <property type="molecule type" value="Genomic_DNA"/>
</dbReference>
<dbReference type="RefSeq" id="YP_636508.1">
    <property type="nucleotide sequence ID" value="NC_008117.1"/>
</dbReference>
<dbReference type="SMR" id="Q32RL8"/>
<dbReference type="GeneID" id="4108170"/>
<dbReference type="GO" id="GO:0009535">
    <property type="term" value="C:chloroplast thylakoid membrane"/>
    <property type="evidence" value="ECO:0007669"/>
    <property type="project" value="UniProtKB-SubCell"/>
</dbReference>
<dbReference type="GO" id="GO:0009539">
    <property type="term" value="C:photosystem II reaction center"/>
    <property type="evidence" value="ECO:0007669"/>
    <property type="project" value="InterPro"/>
</dbReference>
<dbReference type="GO" id="GO:0015979">
    <property type="term" value="P:photosynthesis"/>
    <property type="evidence" value="ECO:0007669"/>
    <property type="project" value="UniProtKB-UniRule"/>
</dbReference>
<dbReference type="GO" id="GO:0042549">
    <property type="term" value="P:photosystem II stabilization"/>
    <property type="evidence" value="ECO:0007669"/>
    <property type="project" value="InterPro"/>
</dbReference>
<dbReference type="FunFam" id="1.10.287.740:FF:000001">
    <property type="entry name" value="Photosystem II reaction center protein Z"/>
    <property type="match status" value="1"/>
</dbReference>
<dbReference type="Gene3D" id="1.10.287.740">
    <property type="entry name" value="Photosystem II PsbZ, reaction centre"/>
    <property type="match status" value="1"/>
</dbReference>
<dbReference type="HAMAP" id="MF_00644">
    <property type="entry name" value="PSII_PsbZ"/>
    <property type="match status" value="1"/>
</dbReference>
<dbReference type="InterPro" id="IPR002644">
    <property type="entry name" value="PSII_PsbZ"/>
</dbReference>
<dbReference type="InterPro" id="IPR036512">
    <property type="entry name" value="PSII_PsbZ_sf"/>
</dbReference>
<dbReference type="NCBIfam" id="TIGR03043">
    <property type="entry name" value="PS_II_psbZ"/>
    <property type="match status" value="1"/>
</dbReference>
<dbReference type="PANTHER" id="PTHR34971">
    <property type="entry name" value="PHOTOSYSTEM II REACTION CENTER PROTEIN Z"/>
    <property type="match status" value="1"/>
</dbReference>
<dbReference type="PANTHER" id="PTHR34971:SF2">
    <property type="entry name" value="PHOTOSYSTEM II REACTION CENTER PROTEIN Z"/>
    <property type="match status" value="1"/>
</dbReference>
<dbReference type="Pfam" id="PF01737">
    <property type="entry name" value="Ycf9"/>
    <property type="match status" value="1"/>
</dbReference>
<dbReference type="SUPFAM" id="SSF161055">
    <property type="entry name" value="PsbZ-like"/>
    <property type="match status" value="1"/>
</dbReference>
<keyword id="KW-0150">Chloroplast</keyword>
<keyword id="KW-0472">Membrane</keyword>
<keyword id="KW-0602">Photosynthesis</keyword>
<keyword id="KW-0604">Photosystem II</keyword>
<keyword id="KW-0934">Plastid</keyword>
<keyword id="KW-0674">Reaction center</keyword>
<keyword id="KW-0793">Thylakoid</keyword>
<keyword id="KW-0812">Transmembrane</keyword>
<keyword id="KW-1133">Transmembrane helix</keyword>
<organism>
    <name type="scientific">Zygnema circumcarinatum</name>
    <name type="common">Green alga</name>
    <dbReference type="NCBI Taxonomy" id="35869"/>
    <lineage>
        <taxon>Eukaryota</taxon>
        <taxon>Viridiplantae</taxon>
        <taxon>Streptophyta</taxon>
        <taxon>Zygnematophyceae</taxon>
        <taxon>Zygnematophycidae</taxon>
        <taxon>Zygnematales</taxon>
        <taxon>Zygnemataceae</taxon>
        <taxon>Zygnema</taxon>
    </lineage>
</organism>
<proteinExistence type="inferred from homology"/>
<geneLocation type="chloroplast"/>
<evidence type="ECO:0000255" key="1">
    <source>
        <dbReference type="HAMAP-Rule" id="MF_00644"/>
    </source>
</evidence>
<accession>Q32RL8</accession>
<gene>
    <name evidence="1" type="primary">psbZ</name>
</gene>
<name>PSBZ_ZYGCR</name>
<protein>
    <recommendedName>
        <fullName evidence="1">Photosystem II reaction center protein Z</fullName>
        <shortName evidence="1">PSII-Z</shortName>
    </recommendedName>
</protein>
<feature type="chain" id="PRO_0000277242" description="Photosystem II reaction center protein Z">
    <location>
        <begin position="1"/>
        <end position="62"/>
    </location>
</feature>
<feature type="transmembrane region" description="Helical" evidence="1">
    <location>
        <begin position="8"/>
        <end position="28"/>
    </location>
</feature>
<feature type="transmembrane region" description="Helical" evidence="1">
    <location>
        <begin position="41"/>
        <end position="61"/>
    </location>
</feature>
<comment type="function">
    <text evidence="1">May control the interaction of photosystem II (PSII) cores with the light-harvesting antenna, regulates electron flow through the 2 photosystem reaction centers. PSII is a light-driven water plastoquinone oxidoreductase, using light energy to abstract electrons from H(2)O, generating a proton gradient subsequently used for ATP formation.</text>
</comment>
<comment type="subunit">
    <text evidence="1">PSII is composed of 1 copy each of membrane proteins PsbA, PsbB, PsbC, PsbD, PsbE, PsbF, PsbH, PsbI, PsbJ, PsbK, PsbL, PsbM, PsbT, PsbY, PsbZ, Psb30/Ycf12, at least 3 peripheral proteins of the oxygen-evolving complex and a large number of cofactors. It forms dimeric complexes.</text>
</comment>
<comment type="subcellular location">
    <subcellularLocation>
        <location evidence="1">Plastid</location>
        <location evidence="1">Chloroplast thylakoid membrane</location>
        <topology evidence="1">Multi-pass membrane protein</topology>
    </subcellularLocation>
</comment>
<comment type="similarity">
    <text evidence="1">Belongs to the PsbZ family.</text>
</comment>
<reference key="1">
    <citation type="journal article" date="2005" name="BMC Biol.">
        <title>The complete chloroplast DNA sequences of the charophycean green algae Staurastrum and Zygnema reveal that the chloroplast genome underwent extensive changes during the evolution of the Zygnematales.</title>
        <authorList>
            <person name="Turmel M."/>
            <person name="Otis C."/>
            <person name="Lemieux C."/>
        </authorList>
    </citation>
    <scope>NUCLEOTIDE SEQUENCE [LARGE SCALE GENOMIC DNA]</scope>
</reference>